<feature type="chain" id="PRO_0000052085" description="Cytochrome P450 71B7">
    <location>
        <begin position="1"/>
        <end position="504"/>
    </location>
</feature>
<feature type="transmembrane region" description="Helical" evidence="2">
    <location>
        <begin position="1"/>
        <end position="21"/>
    </location>
</feature>
<feature type="binding site" description="axial binding residue" evidence="1">
    <location>
        <position position="446"/>
    </location>
    <ligand>
        <name>heme</name>
        <dbReference type="ChEBI" id="CHEBI:30413"/>
    </ligand>
    <ligandPart>
        <name>Fe</name>
        <dbReference type="ChEBI" id="CHEBI:18248"/>
    </ligandPart>
</feature>
<feature type="cross-link" description="Glycyl lysine isopeptide (Lys-Gly) (interchain with G-Cter in ubiquitin)" evidence="3">
    <location>
        <position position="82"/>
    </location>
</feature>
<name>C71B7_ARATH</name>
<evidence type="ECO:0000250" key="1"/>
<evidence type="ECO:0000255" key="2"/>
<evidence type="ECO:0000269" key="3">
    <source>
    </source>
</evidence>
<evidence type="ECO:0000305" key="4"/>
<proteinExistence type="evidence at protein level"/>
<gene>
    <name type="primary">CYP71B7</name>
    <name type="ordered locus">At1g13110</name>
    <name type="ORF">F3F19.13</name>
</gene>
<protein>
    <recommendedName>
        <fullName>Cytochrome P450 71B7</fullName>
        <ecNumber>1.14.-.-</ecNumber>
    </recommendedName>
</protein>
<keyword id="KW-0349">Heme</keyword>
<keyword id="KW-0408">Iron</keyword>
<keyword id="KW-1017">Isopeptide bond</keyword>
<keyword id="KW-0472">Membrane</keyword>
<keyword id="KW-0479">Metal-binding</keyword>
<keyword id="KW-0503">Monooxygenase</keyword>
<keyword id="KW-0560">Oxidoreductase</keyword>
<keyword id="KW-1185">Reference proteome</keyword>
<keyword id="KW-0812">Transmembrane</keyword>
<keyword id="KW-1133">Transmembrane helix</keyword>
<keyword id="KW-0832">Ubl conjugation</keyword>
<organism>
    <name type="scientific">Arabidopsis thaliana</name>
    <name type="common">Mouse-ear cress</name>
    <dbReference type="NCBI Taxonomy" id="3702"/>
    <lineage>
        <taxon>Eukaryota</taxon>
        <taxon>Viridiplantae</taxon>
        <taxon>Streptophyta</taxon>
        <taxon>Embryophyta</taxon>
        <taxon>Tracheophyta</taxon>
        <taxon>Spermatophyta</taxon>
        <taxon>Magnoliopsida</taxon>
        <taxon>eudicotyledons</taxon>
        <taxon>Gunneridae</taxon>
        <taxon>Pentapetalae</taxon>
        <taxon>rosids</taxon>
        <taxon>malvids</taxon>
        <taxon>Brassicales</taxon>
        <taxon>Brassicaceae</taxon>
        <taxon>Camelineae</taxon>
        <taxon>Arabidopsis</taxon>
    </lineage>
</organism>
<sequence>MSILLCFLCLLPVFLVSLSILSKRLKPSKWKLPPGPKTLPIIGNLHNLTGLPHTCFRNLSQKFGPVMLLHFGFVPVVVISSKEGAEEALKTQDLECCSRPETVATRMISYNFKDIGFAPYGEEWKALRKLVVMELLNTKKFQSFRYIREEENDLLIKKLTESALKKSPVNLKKTLFTLVASIVCRLAFGVNIHKCEFVDEDNVADLVNKFEMLVAGVAFTDFFPGVGWLVDRISGQNKTLNNVFSELDTFFQNVLDDHIKPGRQVSENPDVVDVMLDLMKKQEKDGESFKLTTDHLKGIISDIFLAGVNTSAVTLNWAMAELIRNPRVMKKVQDEIRTTLGDKKQRITEQDLSQVHYFKLVVKEIFRLHPAAPLLLPRETMSHVKIQGYDIPVKTQMMINIYSIARDPKLWTNPDEFNPDRFLDSSIDYRGLNFELLPFGSGRRICPGMTLGITTVELGLLNLLYFFDWVVPVGKNVKDINLEETGSIIISKKTTLELVPLVHH</sequence>
<accession>Q96514</accession>
<reference key="1">
    <citation type="journal article" date="1997" name="Arch. Biochem. Biophys.">
        <title>Expression of CYP71B7, a cytochrome P450 expressed sequence Tag from Arabidopsis thaliana.</title>
        <authorList>
            <person name="Maughan J.A."/>
            <person name="Nugent J.H.A."/>
            <person name="Hallahan D.L."/>
        </authorList>
    </citation>
    <scope>NUCLEOTIDE SEQUENCE [MRNA]</scope>
    <source>
        <strain>cv. Columbia</strain>
    </source>
</reference>
<reference key="2">
    <citation type="journal article" date="2000" name="Nature">
        <title>Sequence and analysis of chromosome 1 of the plant Arabidopsis thaliana.</title>
        <authorList>
            <person name="Theologis A."/>
            <person name="Ecker J.R."/>
            <person name="Palm C.J."/>
            <person name="Federspiel N.A."/>
            <person name="Kaul S."/>
            <person name="White O."/>
            <person name="Alonso J."/>
            <person name="Altafi H."/>
            <person name="Araujo R."/>
            <person name="Bowman C.L."/>
            <person name="Brooks S.Y."/>
            <person name="Buehler E."/>
            <person name="Chan A."/>
            <person name="Chao Q."/>
            <person name="Chen H."/>
            <person name="Cheuk R.F."/>
            <person name="Chin C.W."/>
            <person name="Chung M.K."/>
            <person name="Conn L."/>
            <person name="Conway A.B."/>
            <person name="Conway A.R."/>
            <person name="Creasy T.H."/>
            <person name="Dewar K."/>
            <person name="Dunn P."/>
            <person name="Etgu P."/>
            <person name="Feldblyum T.V."/>
            <person name="Feng J.-D."/>
            <person name="Fong B."/>
            <person name="Fujii C.Y."/>
            <person name="Gill J.E."/>
            <person name="Goldsmith A.D."/>
            <person name="Haas B."/>
            <person name="Hansen N.F."/>
            <person name="Hughes B."/>
            <person name="Huizar L."/>
            <person name="Hunter J.L."/>
            <person name="Jenkins J."/>
            <person name="Johnson-Hopson C."/>
            <person name="Khan S."/>
            <person name="Khaykin E."/>
            <person name="Kim C.J."/>
            <person name="Koo H.L."/>
            <person name="Kremenetskaia I."/>
            <person name="Kurtz D.B."/>
            <person name="Kwan A."/>
            <person name="Lam B."/>
            <person name="Langin-Hooper S."/>
            <person name="Lee A."/>
            <person name="Lee J.M."/>
            <person name="Lenz C.A."/>
            <person name="Li J.H."/>
            <person name="Li Y.-P."/>
            <person name="Lin X."/>
            <person name="Liu S.X."/>
            <person name="Liu Z.A."/>
            <person name="Luros J.S."/>
            <person name="Maiti R."/>
            <person name="Marziali A."/>
            <person name="Militscher J."/>
            <person name="Miranda M."/>
            <person name="Nguyen M."/>
            <person name="Nierman W.C."/>
            <person name="Osborne B.I."/>
            <person name="Pai G."/>
            <person name="Peterson J."/>
            <person name="Pham P.K."/>
            <person name="Rizzo M."/>
            <person name="Rooney T."/>
            <person name="Rowley D."/>
            <person name="Sakano H."/>
            <person name="Salzberg S.L."/>
            <person name="Schwartz J.R."/>
            <person name="Shinn P."/>
            <person name="Southwick A.M."/>
            <person name="Sun H."/>
            <person name="Tallon L.J."/>
            <person name="Tambunga G."/>
            <person name="Toriumi M.J."/>
            <person name="Town C.D."/>
            <person name="Utterback T."/>
            <person name="Van Aken S."/>
            <person name="Vaysberg M."/>
            <person name="Vysotskaia V.S."/>
            <person name="Walker M."/>
            <person name="Wu D."/>
            <person name="Yu G."/>
            <person name="Fraser C.M."/>
            <person name="Venter J.C."/>
            <person name="Davis R.W."/>
        </authorList>
    </citation>
    <scope>NUCLEOTIDE SEQUENCE [LARGE SCALE GENOMIC DNA]</scope>
    <source>
        <strain>cv. Columbia</strain>
    </source>
</reference>
<reference key="3">
    <citation type="journal article" date="2017" name="Plant J.">
        <title>Araport11: a complete reannotation of the Arabidopsis thaliana reference genome.</title>
        <authorList>
            <person name="Cheng C.Y."/>
            <person name="Krishnakumar V."/>
            <person name="Chan A.P."/>
            <person name="Thibaud-Nissen F."/>
            <person name="Schobel S."/>
            <person name="Town C.D."/>
        </authorList>
    </citation>
    <scope>GENOME REANNOTATION</scope>
    <source>
        <strain>cv. Columbia</strain>
    </source>
</reference>
<reference key="4">
    <citation type="journal article" date="2003" name="Science">
        <title>Empirical analysis of transcriptional activity in the Arabidopsis genome.</title>
        <authorList>
            <person name="Yamada K."/>
            <person name="Lim J."/>
            <person name="Dale J.M."/>
            <person name="Chen H."/>
            <person name="Shinn P."/>
            <person name="Palm C.J."/>
            <person name="Southwick A.M."/>
            <person name="Wu H.C."/>
            <person name="Kim C.J."/>
            <person name="Nguyen M."/>
            <person name="Pham P.K."/>
            <person name="Cheuk R.F."/>
            <person name="Karlin-Newmann G."/>
            <person name="Liu S.X."/>
            <person name="Lam B."/>
            <person name="Sakano H."/>
            <person name="Wu T."/>
            <person name="Yu G."/>
            <person name="Miranda M."/>
            <person name="Quach H.L."/>
            <person name="Tripp M."/>
            <person name="Chang C.H."/>
            <person name="Lee J.M."/>
            <person name="Toriumi M.J."/>
            <person name="Chan M.M."/>
            <person name="Tang C.C."/>
            <person name="Onodera C.S."/>
            <person name="Deng J.M."/>
            <person name="Akiyama K."/>
            <person name="Ansari Y."/>
            <person name="Arakawa T."/>
            <person name="Banh J."/>
            <person name="Banno F."/>
            <person name="Bowser L."/>
            <person name="Brooks S.Y."/>
            <person name="Carninci P."/>
            <person name="Chao Q."/>
            <person name="Choy N."/>
            <person name="Enju A."/>
            <person name="Goldsmith A.D."/>
            <person name="Gurjal M."/>
            <person name="Hansen N.F."/>
            <person name="Hayashizaki Y."/>
            <person name="Johnson-Hopson C."/>
            <person name="Hsuan V.W."/>
            <person name="Iida K."/>
            <person name="Karnes M."/>
            <person name="Khan S."/>
            <person name="Koesema E."/>
            <person name="Ishida J."/>
            <person name="Jiang P.X."/>
            <person name="Jones T."/>
            <person name="Kawai J."/>
            <person name="Kamiya A."/>
            <person name="Meyers C."/>
            <person name="Nakajima M."/>
            <person name="Narusaka M."/>
            <person name="Seki M."/>
            <person name="Sakurai T."/>
            <person name="Satou M."/>
            <person name="Tamse R."/>
            <person name="Vaysberg M."/>
            <person name="Wallender E.K."/>
            <person name="Wong C."/>
            <person name="Yamamura Y."/>
            <person name="Yuan S."/>
            <person name="Shinozaki K."/>
            <person name="Davis R.W."/>
            <person name="Theologis A."/>
            <person name="Ecker J.R."/>
        </authorList>
    </citation>
    <scope>NUCLEOTIDE SEQUENCE [LARGE SCALE MRNA]</scope>
    <source>
        <strain>cv. Columbia</strain>
    </source>
</reference>
<reference key="5">
    <citation type="journal article" date="2009" name="Plant J.">
        <title>Tandem affinity purification and mass spectrometric analysis of ubiquitylated proteins in Arabidopsis.</title>
        <authorList>
            <person name="Saracco S.A."/>
            <person name="Hansson M."/>
            <person name="Scalf M."/>
            <person name="Walker J.M."/>
            <person name="Smith L.M."/>
            <person name="Vierstra R.D."/>
        </authorList>
    </citation>
    <scope>UBIQUITINATION [LARGE SCALE ANALYSIS] AT LYS-82</scope>
    <scope>IDENTIFICATION BY MASS SPECTROMETRY</scope>
</reference>
<dbReference type="EC" id="1.14.-.-"/>
<dbReference type="EMBL" id="X97864">
    <property type="protein sequence ID" value="CAA66458.1"/>
    <property type="molecule type" value="mRNA"/>
</dbReference>
<dbReference type="EMBL" id="AC007357">
    <property type="protein sequence ID" value="AAD31064.1"/>
    <property type="molecule type" value="Genomic_DNA"/>
</dbReference>
<dbReference type="EMBL" id="CP002684">
    <property type="protein sequence ID" value="AEE28971.1"/>
    <property type="molecule type" value="Genomic_DNA"/>
</dbReference>
<dbReference type="EMBL" id="AF462855">
    <property type="protein sequence ID" value="AAL58941.1"/>
    <property type="molecule type" value="mRNA"/>
</dbReference>
<dbReference type="EMBL" id="BT005809">
    <property type="protein sequence ID" value="AAO64744.1"/>
    <property type="molecule type" value="mRNA"/>
</dbReference>
<dbReference type="PIR" id="T52254">
    <property type="entry name" value="T52254"/>
</dbReference>
<dbReference type="RefSeq" id="NP_172770.1">
    <property type="nucleotide sequence ID" value="NM_101181.3"/>
</dbReference>
<dbReference type="SMR" id="Q96514"/>
<dbReference type="BioGRID" id="23108">
    <property type="interactions" value="1"/>
</dbReference>
<dbReference type="FunCoup" id="Q96514">
    <property type="interactions" value="481"/>
</dbReference>
<dbReference type="STRING" id="3702.Q96514"/>
<dbReference type="iPTMnet" id="Q96514"/>
<dbReference type="PaxDb" id="3702-AT1G13110.1"/>
<dbReference type="ProteomicsDB" id="240388"/>
<dbReference type="EnsemblPlants" id="AT1G13110.1">
    <property type="protein sequence ID" value="AT1G13110.1"/>
    <property type="gene ID" value="AT1G13110"/>
</dbReference>
<dbReference type="GeneID" id="837868"/>
<dbReference type="Gramene" id="AT1G13110.1">
    <property type="protein sequence ID" value="AT1G13110.1"/>
    <property type="gene ID" value="AT1G13110"/>
</dbReference>
<dbReference type="KEGG" id="ath:AT1G13110"/>
<dbReference type="Araport" id="AT1G13110"/>
<dbReference type="TAIR" id="AT1G13110">
    <property type="gene designation" value="CYP71B7"/>
</dbReference>
<dbReference type="eggNOG" id="KOG0156">
    <property type="taxonomic scope" value="Eukaryota"/>
</dbReference>
<dbReference type="HOGENOM" id="CLU_001570_4_1_1"/>
<dbReference type="InParanoid" id="Q96514"/>
<dbReference type="OMA" id="FRFTKDH"/>
<dbReference type="OrthoDB" id="2789670at2759"/>
<dbReference type="PhylomeDB" id="Q96514"/>
<dbReference type="BioCyc" id="ARA:AT1G13110-MONOMER"/>
<dbReference type="PRO" id="PR:Q96514"/>
<dbReference type="Proteomes" id="UP000006548">
    <property type="component" value="Chromosome 1"/>
</dbReference>
<dbReference type="ExpressionAtlas" id="Q96514">
    <property type="expression patterns" value="baseline and differential"/>
</dbReference>
<dbReference type="GO" id="GO:0016020">
    <property type="term" value="C:membrane"/>
    <property type="evidence" value="ECO:0007669"/>
    <property type="project" value="UniProtKB-SubCell"/>
</dbReference>
<dbReference type="GO" id="GO:0020037">
    <property type="term" value="F:heme binding"/>
    <property type="evidence" value="ECO:0007669"/>
    <property type="project" value="InterPro"/>
</dbReference>
<dbReference type="GO" id="GO:0005506">
    <property type="term" value="F:iron ion binding"/>
    <property type="evidence" value="ECO:0007669"/>
    <property type="project" value="InterPro"/>
</dbReference>
<dbReference type="GO" id="GO:0004497">
    <property type="term" value="F:monooxygenase activity"/>
    <property type="evidence" value="ECO:0007669"/>
    <property type="project" value="UniProtKB-KW"/>
</dbReference>
<dbReference type="GO" id="GO:0016705">
    <property type="term" value="F:oxidoreductase activity, acting on paired donors, with incorporation or reduction of molecular oxygen"/>
    <property type="evidence" value="ECO:0007669"/>
    <property type="project" value="InterPro"/>
</dbReference>
<dbReference type="CDD" id="cd11072">
    <property type="entry name" value="CYP71-like"/>
    <property type="match status" value="1"/>
</dbReference>
<dbReference type="FunFam" id="1.10.630.10:FF:000011">
    <property type="entry name" value="Cytochrome P450 83B1"/>
    <property type="match status" value="1"/>
</dbReference>
<dbReference type="Gene3D" id="1.10.630.10">
    <property type="entry name" value="Cytochrome P450"/>
    <property type="match status" value="1"/>
</dbReference>
<dbReference type="InterPro" id="IPR001128">
    <property type="entry name" value="Cyt_P450"/>
</dbReference>
<dbReference type="InterPro" id="IPR017972">
    <property type="entry name" value="Cyt_P450_CS"/>
</dbReference>
<dbReference type="InterPro" id="IPR002401">
    <property type="entry name" value="Cyt_P450_E_grp-I"/>
</dbReference>
<dbReference type="InterPro" id="IPR036396">
    <property type="entry name" value="Cyt_P450_sf"/>
</dbReference>
<dbReference type="PANTHER" id="PTHR47955:SF19">
    <property type="entry name" value="CYTOCHROME P450 71A9-LIKE ISOFORM X1"/>
    <property type="match status" value="1"/>
</dbReference>
<dbReference type="PANTHER" id="PTHR47955">
    <property type="entry name" value="CYTOCHROME P450 FAMILY 71 PROTEIN"/>
    <property type="match status" value="1"/>
</dbReference>
<dbReference type="Pfam" id="PF00067">
    <property type="entry name" value="p450"/>
    <property type="match status" value="1"/>
</dbReference>
<dbReference type="PRINTS" id="PR00463">
    <property type="entry name" value="EP450I"/>
</dbReference>
<dbReference type="PRINTS" id="PR00385">
    <property type="entry name" value="P450"/>
</dbReference>
<dbReference type="SUPFAM" id="SSF48264">
    <property type="entry name" value="Cytochrome P450"/>
    <property type="match status" value="1"/>
</dbReference>
<dbReference type="PROSITE" id="PS00086">
    <property type="entry name" value="CYTOCHROME_P450"/>
    <property type="match status" value="1"/>
</dbReference>
<comment type="cofactor">
    <cofactor evidence="1">
        <name>heme</name>
        <dbReference type="ChEBI" id="CHEBI:30413"/>
    </cofactor>
</comment>
<comment type="subcellular location">
    <subcellularLocation>
        <location evidence="4">Membrane</location>
        <topology evidence="4">Single-pass membrane protein</topology>
    </subcellularLocation>
</comment>
<comment type="tissue specificity">
    <text>Highly expressed in rosette leaves. Also expressed in roots, leaves, flowers, and siliques.</text>
</comment>
<comment type="similarity">
    <text evidence="4">Belongs to the cytochrome P450 family.</text>
</comment>